<protein>
    <recommendedName>
        <fullName evidence="1">Probable manganese-dependent inorganic pyrophosphatase</fullName>
        <ecNumber evidence="1">3.6.1.1</ecNumber>
    </recommendedName>
    <alternativeName>
        <fullName evidence="1">Pyrophosphate phospho-hydrolase</fullName>
        <shortName evidence="1">PPase</shortName>
    </alternativeName>
</protein>
<proteinExistence type="inferred from homology"/>
<comment type="catalytic activity">
    <reaction evidence="1">
        <text>diphosphate + H2O = 2 phosphate + H(+)</text>
        <dbReference type="Rhea" id="RHEA:24576"/>
        <dbReference type="ChEBI" id="CHEBI:15377"/>
        <dbReference type="ChEBI" id="CHEBI:15378"/>
        <dbReference type="ChEBI" id="CHEBI:33019"/>
        <dbReference type="ChEBI" id="CHEBI:43474"/>
        <dbReference type="EC" id="3.6.1.1"/>
    </reaction>
</comment>
<comment type="cofactor">
    <cofactor evidence="1">
        <name>Mn(2+)</name>
        <dbReference type="ChEBI" id="CHEBI:29035"/>
    </cofactor>
    <text evidence="1">Binds 2 manganese ions per subunit.</text>
</comment>
<comment type="subcellular location">
    <subcellularLocation>
        <location evidence="1">Cytoplasm</location>
    </subcellularLocation>
</comment>
<comment type="similarity">
    <text evidence="1">Belongs to the PPase class C family.</text>
</comment>
<reference key="1">
    <citation type="journal article" date="2001" name="J. Bacteriol.">
        <title>Genome sequence and comparative analysis of the solvent-producing bacterium Clostridium acetobutylicum.</title>
        <authorList>
            <person name="Noelling J."/>
            <person name="Breton G."/>
            <person name="Omelchenko M.V."/>
            <person name="Makarova K.S."/>
            <person name="Zeng Q."/>
            <person name="Gibson R."/>
            <person name="Lee H.M."/>
            <person name="Dubois J."/>
            <person name="Qiu D."/>
            <person name="Hitti J."/>
            <person name="Wolf Y.I."/>
            <person name="Tatusov R.L."/>
            <person name="Sabathe F."/>
            <person name="Doucette-Stamm L.A."/>
            <person name="Soucaille P."/>
            <person name="Daly M.J."/>
            <person name="Bennett G.N."/>
            <person name="Koonin E.V."/>
            <person name="Smith D.R."/>
        </authorList>
    </citation>
    <scope>NUCLEOTIDE SEQUENCE [LARGE SCALE GENOMIC DNA]</scope>
    <source>
        <strain>ATCC 824 / DSM 792 / JCM 1419 / IAM 19013 / LMG 5710 / NBRC 13948 / NRRL B-527 / VKM B-1787 / 2291 / W</strain>
    </source>
</reference>
<keyword id="KW-0963">Cytoplasm</keyword>
<keyword id="KW-0378">Hydrolase</keyword>
<keyword id="KW-0464">Manganese</keyword>
<keyword id="KW-0479">Metal-binding</keyword>
<keyword id="KW-1185">Reference proteome</keyword>
<feature type="chain" id="PRO_0000158570" description="Probable manganese-dependent inorganic pyrophosphatase">
    <location>
        <begin position="1"/>
        <end position="310"/>
    </location>
</feature>
<feature type="binding site" evidence="1">
    <location>
        <position position="10"/>
    </location>
    <ligand>
        <name>Mn(2+)</name>
        <dbReference type="ChEBI" id="CHEBI:29035"/>
        <label>1</label>
    </ligand>
</feature>
<feature type="binding site" evidence="1">
    <location>
        <position position="14"/>
    </location>
    <ligand>
        <name>Mn(2+)</name>
        <dbReference type="ChEBI" id="CHEBI:29035"/>
        <label>1</label>
    </ligand>
</feature>
<feature type="binding site" evidence="1">
    <location>
        <position position="16"/>
    </location>
    <ligand>
        <name>Mn(2+)</name>
        <dbReference type="ChEBI" id="CHEBI:29035"/>
        <label>2</label>
    </ligand>
</feature>
<feature type="binding site" evidence="1">
    <location>
        <position position="75"/>
    </location>
    <ligand>
        <name>Mn(2+)</name>
        <dbReference type="ChEBI" id="CHEBI:29035"/>
        <label>1</label>
    </ligand>
</feature>
<feature type="binding site" evidence="1">
    <location>
        <position position="75"/>
    </location>
    <ligand>
        <name>Mn(2+)</name>
        <dbReference type="ChEBI" id="CHEBI:29035"/>
        <label>2</label>
    </ligand>
</feature>
<feature type="binding site" evidence="1">
    <location>
        <position position="97"/>
    </location>
    <ligand>
        <name>Mn(2+)</name>
        <dbReference type="ChEBI" id="CHEBI:29035"/>
        <label>2</label>
    </ligand>
</feature>
<feature type="binding site" evidence="1">
    <location>
        <position position="149"/>
    </location>
    <ligand>
        <name>Mn(2+)</name>
        <dbReference type="ChEBI" id="CHEBI:29035"/>
        <label>2</label>
    </ligand>
</feature>
<evidence type="ECO:0000255" key="1">
    <source>
        <dbReference type="HAMAP-Rule" id="MF_00207"/>
    </source>
</evidence>
<gene>
    <name evidence="1" type="primary">ppaC</name>
    <name type="ordered locus">CA_C2138</name>
</gene>
<name>PPAC_CLOAB</name>
<accession>Q97H75</accession>
<sequence>MEDIIYITGHKNPDTDSICSAIAYSELKNKLGFNTVPGRLGNISRETEFALNYFKANAPKLLENLSSNQDIIIVDHNERAQSVDNLEDLHLLEIIDHHRIADIQTSYPIFFRNEPVGCSSTIIGSMYFEKGIEPSKRAAGLMCSAIISDTLLFRSPTTTARDKEVLKKLAKIADIDPEKYASEMFKAGTSLKGKTVEEIFNSDYKAFNLGDKKIGVSQVTTMDIEGFDEYKKDMLAYMNKKVKDENFNAVLLLLTDIIKEGSLIIATGENTDLVNKAFNVELKDNAVYVPGILSRKKQVIPPLTSAIEGK</sequence>
<dbReference type="EC" id="3.6.1.1" evidence="1"/>
<dbReference type="EMBL" id="AE001437">
    <property type="protein sequence ID" value="AAK80096.1"/>
    <property type="molecule type" value="Genomic_DNA"/>
</dbReference>
<dbReference type="PIR" id="E97163">
    <property type="entry name" value="E97163"/>
</dbReference>
<dbReference type="RefSeq" id="NP_348756.1">
    <property type="nucleotide sequence ID" value="NC_003030.1"/>
</dbReference>
<dbReference type="RefSeq" id="WP_010965437.1">
    <property type="nucleotide sequence ID" value="NC_003030.1"/>
</dbReference>
<dbReference type="SMR" id="Q97H75"/>
<dbReference type="STRING" id="272562.CA_C2138"/>
<dbReference type="KEGG" id="cac:CA_C2138"/>
<dbReference type="PATRIC" id="fig|272562.8.peg.2340"/>
<dbReference type="eggNOG" id="COG1227">
    <property type="taxonomic scope" value="Bacteria"/>
</dbReference>
<dbReference type="HOGENOM" id="CLU_025243_0_1_9"/>
<dbReference type="OrthoDB" id="9766150at2"/>
<dbReference type="Proteomes" id="UP000000814">
    <property type="component" value="Chromosome"/>
</dbReference>
<dbReference type="GO" id="GO:0005737">
    <property type="term" value="C:cytoplasm"/>
    <property type="evidence" value="ECO:0007669"/>
    <property type="project" value="UniProtKB-SubCell"/>
</dbReference>
<dbReference type="GO" id="GO:0004427">
    <property type="term" value="F:inorganic diphosphate phosphatase activity"/>
    <property type="evidence" value="ECO:0007669"/>
    <property type="project" value="UniProtKB-UniRule"/>
</dbReference>
<dbReference type="GO" id="GO:0030145">
    <property type="term" value="F:manganese ion binding"/>
    <property type="evidence" value="ECO:0007669"/>
    <property type="project" value="UniProtKB-UniRule"/>
</dbReference>
<dbReference type="FunFam" id="3.10.310.20:FF:000001">
    <property type="entry name" value="Probable manganese-dependent inorganic pyrophosphatase"/>
    <property type="match status" value="1"/>
</dbReference>
<dbReference type="FunFam" id="3.90.1640.10:FF:000001">
    <property type="entry name" value="Probable manganese-dependent inorganic pyrophosphatase"/>
    <property type="match status" value="1"/>
</dbReference>
<dbReference type="Gene3D" id="3.10.310.20">
    <property type="entry name" value="DHHA2 domain"/>
    <property type="match status" value="1"/>
</dbReference>
<dbReference type="Gene3D" id="3.90.1640.10">
    <property type="entry name" value="inorganic pyrophosphatase (n-terminal core)"/>
    <property type="match status" value="1"/>
</dbReference>
<dbReference type="HAMAP" id="MF_00207">
    <property type="entry name" value="PPase_C"/>
    <property type="match status" value="1"/>
</dbReference>
<dbReference type="InterPro" id="IPR001667">
    <property type="entry name" value="DDH_dom"/>
</dbReference>
<dbReference type="InterPro" id="IPR038763">
    <property type="entry name" value="DHH_sf"/>
</dbReference>
<dbReference type="InterPro" id="IPR004097">
    <property type="entry name" value="DHHA2"/>
</dbReference>
<dbReference type="InterPro" id="IPR038222">
    <property type="entry name" value="DHHA2_dom_sf"/>
</dbReference>
<dbReference type="InterPro" id="IPR022934">
    <property type="entry name" value="Mn-dep_inorganic_PyrPase"/>
</dbReference>
<dbReference type="NCBIfam" id="NF003877">
    <property type="entry name" value="PRK05427.1"/>
    <property type="match status" value="1"/>
</dbReference>
<dbReference type="NCBIfam" id="NF011443">
    <property type="entry name" value="PRK14869.1-5"/>
    <property type="match status" value="1"/>
</dbReference>
<dbReference type="PANTHER" id="PTHR12112">
    <property type="entry name" value="BNIP - RELATED"/>
    <property type="match status" value="1"/>
</dbReference>
<dbReference type="PANTHER" id="PTHR12112:SF22">
    <property type="entry name" value="MANGANESE-DEPENDENT INORGANIC PYROPHOSPHATASE-RELATED"/>
    <property type="match status" value="1"/>
</dbReference>
<dbReference type="Pfam" id="PF01368">
    <property type="entry name" value="DHH"/>
    <property type="match status" value="1"/>
</dbReference>
<dbReference type="Pfam" id="PF02833">
    <property type="entry name" value="DHHA2"/>
    <property type="match status" value="1"/>
</dbReference>
<dbReference type="SMART" id="SM01131">
    <property type="entry name" value="DHHA2"/>
    <property type="match status" value="1"/>
</dbReference>
<dbReference type="SUPFAM" id="SSF64182">
    <property type="entry name" value="DHH phosphoesterases"/>
    <property type="match status" value="1"/>
</dbReference>
<organism>
    <name type="scientific">Clostridium acetobutylicum (strain ATCC 824 / DSM 792 / JCM 1419 / IAM 19013 / LMG 5710 / NBRC 13948 / NRRL B-527 / VKM B-1787 / 2291 / W)</name>
    <dbReference type="NCBI Taxonomy" id="272562"/>
    <lineage>
        <taxon>Bacteria</taxon>
        <taxon>Bacillati</taxon>
        <taxon>Bacillota</taxon>
        <taxon>Clostridia</taxon>
        <taxon>Eubacteriales</taxon>
        <taxon>Clostridiaceae</taxon>
        <taxon>Clostridium</taxon>
    </lineage>
</organism>